<evidence type="ECO:0000255" key="1">
    <source>
        <dbReference type="HAMAP-Rule" id="MF_04083"/>
    </source>
</evidence>
<evidence type="ECO:0000256" key="2">
    <source>
        <dbReference type="SAM" id="MobiDB-lite"/>
    </source>
</evidence>
<evidence type="ECO:0007829" key="3">
    <source>
        <dbReference type="PDB" id="2NY0"/>
    </source>
</evidence>
<evidence type="ECO:0007829" key="4">
    <source>
        <dbReference type="PDB" id="2NY2"/>
    </source>
</evidence>
<name>ENV_HV1MF</name>
<reference key="1">
    <citation type="journal article" date="1990" name="J. Virol.">
        <title>Cloning and characterization of human immunodeficiency virus type 1 variants diminished in the ability to induce syncytium-independent cytolysis.</title>
        <authorList>
            <person name="Stevenson M."/>
            <person name="Haggerty S."/>
            <person name="Lamonica C."/>
            <person name="Mann A.M."/>
            <person name="Meier C."/>
            <person name="Wasiak A."/>
        </authorList>
    </citation>
    <scope>NUCLEOTIDE SEQUENCE [GENOMIC RNA]</scope>
</reference>
<reference key="2">
    <citation type="journal article" date="2003" name="APMIS">
        <title>Pathogens target DC-SIGN to influence their fate DC-SIGN functions as a pathogen receptor with broad specificity.</title>
        <authorList>
            <person name="Geijtenbeek T.B."/>
            <person name="van Kooyk Y."/>
        </authorList>
    </citation>
    <scope>REVIEW</scope>
</reference>
<reference key="3">
    <citation type="journal article" date="2003" name="Biochim. Biophys. Acta">
        <title>The HIV Env-mediated fusion reaction.</title>
        <authorList>
            <person name="Gallo S.A."/>
            <person name="Finnegan C.M."/>
            <person name="Viard M."/>
            <person name="Raviv Y."/>
            <person name="Dimitrov A."/>
            <person name="Rawat S.S."/>
            <person name="Puri A."/>
            <person name="Durell S."/>
            <person name="Blumenthal R."/>
        </authorList>
    </citation>
    <scope>REVIEW</scope>
</reference>
<reference key="4">
    <citation type="journal article" date="2005" name="Cell Death Differ.">
        <title>Mechanisms of apoptosis induction by the HIV-1 envelope.</title>
        <authorList>
            <person name="Perfettini J.-L."/>
            <person name="Castedo M."/>
            <person name="Roumier T."/>
            <person name="Andreau K."/>
            <person name="Nardacci R."/>
            <person name="Piacentini M."/>
            <person name="Kroemer G."/>
        </authorList>
    </citation>
    <scope>REVIEW</scope>
</reference>
<reference key="5">
    <citation type="journal article" date="2005" name="AIDS Res. Hum. Retroviruses">
        <title>V3: HIV's switch-hitter.</title>
        <authorList>
            <person name="Hartley O."/>
            <person name="Klasse P.J."/>
            <person name="Sattentau Q.J."/>
            <person name="Moore J.P."/>
        </authorList>
    </citation>
    <scope>REVIEW</scope>
</reference>
<reference key="6">
    <citation type="journal article" date="2005" name="Drugs">
        <title>Emerging drug targets for antiretroviral therapy.</title>
        <authorList>
            <person name="Reeves J.D."/>
            <person name="Piefer A.J."/>
        </authorList>
    </citation>
    <scope>REVIEW</scope>
</reference>
<reference key="7">
    <citation type="journal article" date="2006" name="EMBO J.">
        <title>HIV and the chemokine system: 10 years later.</title>
        <authorList>
            <person name="Lusso P."/>
        </authorList>
    </citation>
    <scope>REVIEW</scope>
</reference>
<gene>
    <name evidence="1" type="primary">env</name>
</gene>
<organism>
    <name type="scientific">Human immunodeficiency virus type 1 group M subtype B (isolate MFA)</name>
    <name type="common">HIV-1</name>
    <dbReference type="NCBI Taxonomy" id="11704"/>
    <lineage>
        <taxon>Viruses</taxon>
        <taxon>Riboviria</taxon>
        <taxon>Pararnavirae</taxon>
        <taxon>Artverviricota</taxon>
        <taxon>Revtraviricetes</taxon>
        <taxon>Ortervirales</taxon>
        <taxon>Retroviridae</taxon>
        <taxon>Orthoretrovirinae</taxon>
        <taxon>Lentivirus</taxon>
        <taxon>Human immunodeficiency virus type 1</taxon>
    </lineage>
</organism>
<organismHost>
    <name type="scientific">Homo sapiens</name>
    <name type="common">Human</name>
    <dbReference type="NCBI Taxonomy" id="9606"/>
</organismHost>
<comment type="function">
    <molecule>Envelope glycoprotein gp160</molecule>
    <text evidence="1">Oligomerizes in the host endoplasmic reticulum into predominantly trimers. In a second time, gp160 transits in the host Golgi, where glycosylation is completed. The precursor is then proteolytically cleaved in the trans-Golgi and thereby activated by cellular furin or furin-like proteases to produce gp120 and gp41.</text>
</comment>
<comment type="function">
    <molecule>Surface protein gp120</molecule>
    <text evidence="1">Attaches the virus to the host lymphoid cell by binding to the primary receptor CD4. This interaction induces a structural rearrangement creating a high affinity binding site for a chemokine coreceptor like CXCR4 and/or CCR5. Acts as a ligand for CD209/DC-SIGN and CLEC4M/DC-SIGNR, which are respectively found on dendritic cells (DCs), and on endothelial cells of liver sinusoids and lymph node sinuses. These interactions allow capture of viral particles at mucosal surfaces by these cells and subsequent transmission to permissive cells. HIV subverts the migration properties of dendritic cells to gain access to CD4+ T-cells in lymph nodes. Virus transmission to permissive T-cells occurs either in trans (without DCs infection, through viral capture and transmission), or in cis (following DCs productive infection, through the usual CD4-gp120 interaction), thereby inducing a robust infection. In trans infection, bound virions remain infectious over days and it is proposed that they are not degraded, but protected in non-lysosomal acidic organelles within the DCs close to the cell membrane thus contributing to the viral infectious potential during DCs' migration from the periphery to the lymphoid tissues. On arrival at lymphoid tissues, intact virions recycle back to DCs' cell surface allowing virus transmission to CD4+ T-cells.</text>
</comment>
<comment type="function">
    <molecule>Transmembrane protein gp41</molecule>
    <text evidence="1">Acts as a class I viral fusion protein. Under the current model, the protein has at least 3 conformational states: pre-fusion native state, pre-hairpin intermediate state, and post-fusion hairpin state. During fusion of viral and target intracellular membranes, the coiled coil regions (heptad repeats) assume a trimer-of-hairpins structure, positioning the fusion peptide in close proximity to the C-terminal region of the ectodomain. The formation of this structure appears to drive apposition and subsequent fusion of viral and target cell membranes. Complete fusion occurs in host cell endosomes and is dynamin-dependent, however some lipid transfer might occur at the plasma membrane. The virus undergoes clathrin-dependent internalization long before endosomal fusion, thus minimizing the surface exposure of conserved viral epitopes during fusion and reducing the efficacy of inhibitors targeting these epitopes. Membranes fusion leads to delivery of the nucleocapsid into the cytoplasm.</text>
</comment>
<comment type="subunit">
    <molecule>Surface protein gp120</molecule>
    <text evidence="1">The mature envelope protein (Env) consists of a homotrimer of non-covalently associated gp120-gp41 heterodimers. The resulting complex protrudes from the virus surface as a spike. There seems to be as few as 10 spikes on the average virion. Interacts with host CD4, CCR5 and CXCR4. Gp120 also interacts with the C-type lectins CD209/DC-SIGN and CLEC4M/DC-SIGNR (collectively referred to as DC-SIGN(R)). Gp120 and gp41 interact with GalCer. Gp120 interacts with host ITGA4/ITGB7 complex; on CD4+ T-cells, this interaction results in rapid activation of integrin ITGAL/LFA-1, which facilitates efficient cell-to-cell spreading of HIV-1. Gp120 interacts with cell-associated heparan sulfate; this interaction increases virus infectivity on permissive cells and may be involved in infection of CD4- cells.</text>
</comment>
<comment type="subunit">
    <molecule>Transmembrane protein gp41</molecule>
    <text evidence="1">The mature envelope protein (Env) consists of a homotrimer of non-covalently associated gp120-gp41 heterodimers. The resulting complex protrudes from the virus surface as a spike. There seems to be as few as 10 spikes on the average virion.</text>
</comment>
<comment type="subcellular location">
    <molecule>Surface protein gp120</molecule>
    <subcellularLocation>
        <location evidence="1">Virion membrane</location>
        <topology evidence="1">Peripheral membrane protein</topology>
    </subcellularLocation>
    <subcellularLocation>
        <location evidence="1">Host cell membrane</location>
        <topology evidence="1">Peripheral membrane protein</topology>
    </subcellularLocation>
    <subcellularLocation>
        <location evidence="1">Host endosome membrane</location>
        <topology evidence="1">Single-pass type I membrane protein</topology>
    </subcellularLocation>
    <text evidence="1">The surface protein is not anchored to the viral envelope, but associates with the extravirion surface through its binding to TM. It is probably concentrated at the site of budding and incorporated into the virions possibly by contacts between the cytoplasmic tail of Env and the N-terminus of Gag.</text>
</comment>
<comment type="subcellular location">
    <molecule>Transmembrane protein gp41</molecule>
    <subcellularLocation>
        <location evidence="1">Virion membrane</location>
        <topology evidence="1">Single-pass type I membrane protein</topology>
    </subcellularLocation>
    <subcellularLocation>
        <location evidence="1">Host cell membrane</location>
        <topology evidence="1">Single-pass type I membrane protein</topology>
    </subcellularLocation>
    <subcellularLocation>
        <location evidence="1">Host endosome membrane</location>
        <topology evidence="1">Single-pass type I membrane protein</topology>
    </subcellularLocation>
    <text evidence="1">It is probably concentrated at the site of budding and incorporated into the virions possibly by contacts between the cytoplasmic tail of Env and the N-terminus of Gag.</text>
</comment>
<comment type="domain">
    <text evidence="1">Some of the most genetically diverse regions of the viral genome are present in Env. They are called variable regions 1 through 5 (V1 through V5). Coreceptor usage of gp120 is determined mainly by the primary structure of the third variable region (V3) in the outer domain of gp120. The sequence of V3 determines which coreceptor, CCR5 and/or CXCR4 (corresponding to R5/macrophage, X4/T cell and R5X4/T cell and macrophage tropism), is used to trigger the fusion potential of the Env complex, and hence which cells the virus can infect. Binding to CCR5 involves a region adjacent in addition to V3.</text>
</comment>
<comment type="domain">
    <text evidence="1">The membrane proximal external region (MPER) present in gp41 is a tryptophan-rich region recognized by the antibodies 2F5, Z13, and 4E10. MPER seems to play a role in fusion.</text>
</comment>
<comment type="domain">
    <text evidence="1">The 17 amino acids long immunosuppressive region is present in many retroviral envelope proteins. Synthetic peptides derived from this relatively conserved sequence inhibit immune function in vitro and in vivo.</text>
</comment>
<comment type="domain">
    <text evidence="1">The YXXL motif is involved in determining the exact site of viral release at the surface of infected mononuclear cells and promotes endocytosis. YXXL and di-leucine endocytosis motifs interact directly or indirectly with the clathrin adapter complexes, opperate independently, and their activities are not additive.</text>
</comment>
<comment type="domain">
    <text evidence="1">The CD4-binding region is targeted by the antibody b12.</text>
</comment>
<comment type="PTM">
    <text evidence="1">Highly glycosylated by host. The high number of glycan on the protein is reffered to as 'glycan shield' because it contributes to hide protein sequence from adaptive immune system.</text>
</comment>
<comment type="PTM">
    <text evidence="1">Palmitoylation of the transmembrane protein and of Env polyprotein (prior to its proteolytic cleavage) is essential for their association with host cell membrane lipid rafts. Palmitoylation is therefore required for envelope trafficking to classical lipid rafts, but not for viral replication.</text>
</comment>
<comment type="PTM">
    <text evidence="1">Specific enzymatic cleavages in vivo yield mature proteins. Envelope glycoproteins are synthesized as an inactive precursor that is heavily N-glycosylated and processed likely by host cell furin in the Golgi to yield the mature SU and TM proteins. The cleavage site between SU and TM requires the minimal sequence [KR]-X-[KR]-R. About 2 of the 9 disulfide bonds of gp41 are reduced by P4HB/PDI, following binding to CD4 receptor.</text>
</comment>
<comment type="miscellaneous">
    <text evidence="1">Inhibitors targeting HIV-1 viral envelope proteins are used as antiretroviral drugs. Attachment of virions to the cell surface via non-specific interactions and CD4 binding can be blocked by inhibitors that include cyanovirin-N, cyclotriazadisulfonamide analogs, PRO 2000, TNX 355 and PRO 542. In addition, BMS 806 can block CD4-induced conformational changes. Env interactions with the coreceptor molecules can be targeted by CCR5 antagonists including SCH-D, maraviroc (UK 427857) and aplaviroc (GW 873140), and the CXCR4 antagonist AMD 070. Fusion of viral and cellular membranes can be inhibited by peptides such as enfuvirtide and tifuvirtide (T 1249). Resistance to inhibitors associated with mutations in Env are observed. Most of the time, single mutations confer only a modest reduction in drug susceptibility. Combination of several mutations is usually required to develop a high-level drug resistance.</text>
</comment>
<comment type="miscellaneous">
    <text evidence="1">HIV-1 lineages are divided in three main groups, M (for Major), O (for Outlier), and N (for New, or Non-M, Non-O). The vast majority of strains found worldwide belong to the group M. Group O seems to be endemic to and largely confined to Cameroon and neighboring countries in West Central Africa, where these viruses represent a small minority of HIV-1 strains. The group N is represented by a limited number of isolates from Cameroonian persons. The group M is further subdivided in 9 clades or subtypes (A to D, F to H, J and K).</text>
</comment>
<comment type="similarity">
    <text evidence="1">Belongs to the HIV-1 env protein family.</text>
</comment>
<comment type="online information" name="hivdb">
    <link uri="https://hivdb.stanford.edu"/>
    <text>HIV drug resistance database</text>
</comment>
<comment type="online information" name="HIV drug resistance mutations">
    <link uri="https://www.iasusa.org/hiv-drug-resistance/hiv-drug-resistance-mutations/"/>
</comment>
<keyword id="KW-0002">3D-structure</keyword>
<keyword id="KW-0014">AIDS</keyword>
<keyword id="KW-0053">Apoptosis</keyword>
<keyword id="KW-1165">Clathrin-mediated endocytosis of virus by host</keyword>
<keyword id="KW-0165">Cleavage on pair of basic residues</keyword>
<keyword id="KW-0175">Coiled coil</keyword>
<keyword id="KW-1015">Disulfide bond</keyword>
<keyword id="KW-1170">Fusion of virus membrane with host endosomal membrane</keyword>
<keyword id="KW-1168">Fusion of virus membrane with host membrane</keyword>
<keyword id="KW-0325">Glycoprotein</keyword>
<keyword id="KW-1032">Host cell membrane</keyword>
<keyword id="KW-1039">Host endosome</keyword>
<keyword id="KW-1043">Host membrane</keyword>
<keyword id="KW-0945">Host-virus interaction</keyword>
<keyword id="KW-0449">Lipoprotein</keyword>
<keyword id="KW-0472">Membrane</keyword>
<keyword id="KW-0564">Palmitate</keyword>
<keyword id="KW-0732">Signal</keyword>
<keyword id="KW-0812">Transmembrane</keyword>
<keyword id="KW-1133">Transmembrane helix</keyword>
<keyword id="KW-1161">Viral attachment to host cell</keyword>
<keyword id="KW-0261">Viral envelope protein</keyword>
<keyword id="KW-0899">Viral immunoevasion</keyword>
<keyword id="KW-1162">Viral penetration into host cytoplasm</keyword>
<keyword id="KW-0946">Virion</keyword>
<keyword id="KW-1164">Virus endocytosis by host</keyword>
<keyword id="KW-1160">Virus entry into host cell</keyword>
<dbReference type="EMBL" id="M33943">
    <property type="protein sequence ID" value="AAA44850.1"/>
    <property type="molecule type" value="Genomic_RNA"/>
</dbReference>
<dbReference type="PDB" id="2NXZ">
    <property type="method" value="X-ray"/>
    <property type="resolution" value="2.04 A"/>
    <property type="chains" value="A=83-490"/>
</dbReference>
<dbReference type="PDB" id="2NY0">
    <property type="method" value="X-ray"/>
    <property type="resolution" value="2.20 A"/>
    <property type="chains" value="A=83-490"/>
</dbReference>
<dbReference type="PDB" id="2NY2">
    <property type="method" value="X-ray"/>
    <property type="resolution" value="2.00 A"/>
    <property type="chains" value="A=86-490"/>
</dbReference>
<dbReference type="PDB" id="2NY4">
    <property type="method" value="X-ray"/>
    <property type="resolution" value="2.00 A"/>
    <property type="chains" value="A=83-490"/>
</dbReference>
<dbReference type="PDB" id="2NY5">
    <property type="method" value="X-ray"/>
    <property type="resolution" value="2.50 A"/>
    <property type="chains" value="G=83-490"/>
</dbReference>
<dbReference type="PDB" id="2PJV">
    <property type="method" value="NMR"/>
    <property type="chains" value="A=510-532"/>
</dbReference>
<dbReference type="PDB" id="3ECB">
    <property type="method" value="X-ray"/>
    <property type="resolution" value="1.70 A"/>
    <property type="chains" value="P=309-318"/>
</dbReference>
<dbReference type="PDBsum" id="2NXZ"/>
<dbReference type="PDBsum" id="2NY0"/>
<dbReference type="PDBsum" id="2NY2"/>
<dbReference type="PDBsum" id="2NY4"/>
<dbReference type="PDBsum" id="2NY5"/>
<dbReference type="PDBsum" id="2PJV"/>
<dbReference type="PDBsum" id="3ECB"/>
<dbReference type="BMRB" id="P19551"/>
<dbReference type="SMR" id="P19551"/>
<dbReference type="GlyCosmos" id="P19551">
    <property type="glycosylation" value="27 sites, No reported glycans"/>
</dbReference>
<dbReference type="Reactome" id="R-HSA-5621480">
    <property type="pathway name" value="Dectin-2 family"/>
</dbReference>
<dbReference type="EvolutionaryTrace" id="P19551"/>
<dbReference type="GO" id="GO:0044175">
    <property type="term" value="C:host cell endosome membrane"/>
    <property type="evidence" value="ECO:0007669"/>
    <property type="project" value="UniProtKB-SubCell"/>
</dbReference>
<dbReference type="GO" id="GO:0020002">
    <property type="term" value="C:host cell plasma membrane"/>
    <property type="evidence" value="ECO:0007669"/>
    <property type="project" value="UniProtKB-SubCell"/>
</dbReference>
<dbReference type="GO" id="GO:0016020">
    <property type="term" value="C:membrane"/>
    <property type="evidence" value="ECO:0007669"/>
    <property type="project" value="UniProtKB-UniRule"/>
</dbReference>
<dbReference type="GO" id="GO:0019031">
    <property type="term" value="C:viral envelope"/>
    <property type="evidence" value="ECO:0007669"/>
    <property type="project" value="UniProtKB-KW"/>
</dbReference>
<dbReference type="GO" id="GO:0055036">
    <property type="term" value="C:virion membrane"/>
    <property type="evidence" value="ECO:0007669"/>
    <property type="project" value="UniProtKB-SubCell"/>
</dbReference>
<dbReference type="GO" id="GO:0005198">
    <property type="term" value="F:structural molecule activity"/>
    <property type="evidence" value="ECO:0007669"/>
    <property type="project" value="UniProtKB-UniRule"/>
</dbReference>
<dbReference type="GO" id="GO:0075512">
    <property type="term" value="P:clathrin-dependent endocytosis of virus by host cell"/>
    <property type="evidence" value="ECO:0007669"/>
    <property type="project" value="UniProtKB-UniRule"/>
</dbReference>
<dbReference type="GO" id="GO:0039654">
    <property type="term" value="P:fusion of virus membrane with host endosome membrane"/>
    <property type="evidence" value="ECO:0007669"/>
    <property type="project" value="UniProtKB-UniRule"/>
</dbReference>
<dbReference type="GO" id="GO:0019064">
    <property type="term" value="P:fusion of virus membrane with host plasma membrane"/>
    <property type="evidence" value="ECO:0007669"/>
    <property type="project" value="UniProtKB-UniRule"/>
</dbReference>
<dbReference type="GO" id="GO:1903908">
    <property type="term" value="P:positive regulation of plasma membrane raft polarization"/>
    <property type="evidence" value="ECO:0007669"/>
    <property type="project" value="UniProtKB-UniRule"/>
</dbReference>
<dbReference type="GO" id="GO:1903911">
    <property type="term" value="P:positive regulation of receptor clustering"/>
    <property type="evidence" value="ECO:0007669"/>
    <property type="project" value="UniProtKB-UniRule"/>
</dbReference>
<dbReference type="GO" id="GO:0019082">
    <property type="term" value="P:viral protein processing"/>
    <property type="evidence" value="ECO:0007669"/>
    <property type="project" value="UniProtKB-UniRule"/>
</dbReference>
<dbReference type="GO" id="GO:0019062">
    <property type="term" value="P:virion attachment to host cell"/>
    <property type="evidence" value="ECO:0007669"/>
    <property type="project" value="UniProtKB-UniRule"/>
</dbReference>
<dbReference type="CDD" id="cd09909">
    <property type="entry name" value="HIV-1-like_HR1-HR2"/>
    <property type="match status" value="1"/>
</dbReference>
<dbReference type="FunFam" id="1.10.287.210:FF:000001">
    <property type="entry name" value="Envelope glycoprotein gp160"/>
    <property type="match status" value="1"/>
</dbReference>
<dbReference type="FunFam" id="1.20.5.490:FF:000001">
    <property type="entry name" value="Envelope glycoprotein gp160"/>
    <property type="match status" value="1"/>
</dbReference>
<dbReference type="FunFam" id="2.170.40.20:FF:000001">
    <property type="entry name" value="Envelope glycoprotein gp160"/>
    <property type="match status" value="1"/>
</dbReference>
<dbReference type="FunFam" id="2.170.40.20:FF:000003">
    <property type="entry name" value="Envelope glycoprotein gp160"/>
    <property type="match status" value="1"/>
</dbReference>
<dbReference type="Gene3D" id="1.10.287.210">
    <property type="match status" value="1"/>
</dbReference>
<dbReference type="Gene3D" id="2.170.40.20">
    <property type="entry name" value="Human immunodeficiency virus 1, Gp160, envelope glycoprotein"/>
    <property type="match status" value="2"/>
</dbReference>
<dbReference type="Gene3D" id="1.20.5.490">
    <property type="entry name" value="Single helix bin"/>
    <property type="match status" value="1"/>
</dbReference>
<dbReference type="HAMAP" id="MF_04083">
    <property type="entry name" value="HIV_ENV"/>
    <property type="match status" value="1"/>
</dbReference>
<dbReference type="InterPro" id="IPR036377">
    <property type="entry name" value="Gp120_core_sf"/>
</dbReference>
<dbReference type="InterPro" id="IPR037527">
    <property type="entry name" value="Gp160"/>
</dbReference>
<dbReference type="InterPro" id="IPR000328">
    <property type="entry name" value="GP41-like"/>
</dbReference>
<dbReference type="InterPro" id="IPR000777">
    <property type="entry name" value="HIV1_Gp120"/>
</dbReference>
<dbReference type="Pfam" id="PF00516">
    <property type="entry name" value="GP120"/>
    <property type="match status" value="1"/>
</dbReference>
<dbReference type="Pfam" id="PF00517">
    <property type="entry name" value="GP41"/>
    <property type="match status" value="1"/>
</dbReference>
<dbReference type="SUPFAM" id="SSF56502">
    <property type="entry name" value="gp120 core"/>
    <property type="match status" value="1"/>
</dbReference>
<dbReference type="SUPFAM" id="SSF58069">
    <property type="entry name" value="Virus ectodomain"/>
    <property type="match status" value="1"/>
</dbReference>
<protein>
    <recommendedName>
        <fullName evidence="1">Envelope glycoprotein gp160</fullName>
    </recommendedName>
    <alternativeName>
        <fullName evidence="1">Env polyprotein</fullName>
    </alternativeName>
    <component>
        <recommendedName>
            <fullName evidence="1">Surface protein gp120</fullName>
            <shortName evidence="1">SU</shortName>
        </recommendedName>
        <alternativeName>
            <fullName evidence="1">Glycoprotein 120</fullName>
            <shortName evidence="1">gp120</shortName>
        </alternativeName>
    </component>
    <component>
        <recommendedName>
            <fullName evidence="1">Transmembrane protein gp41</fullName>
            <shortName evidence="1">TM</shortName>
        </recommendedName>
        <alternativeName>
            <fullName evidence="1">Glycoprotein 41</fullName>
            <shortName evidence="1">gp41</shortName>
        </alternativeName>
    </component>
</protein>
<proteinExistence type="evidence at protein level"/>
<feature type="signal peptide" evidence="1">
    <location>
        <begin position="1"/>
        <end position="32"/>
    </location>
</feature>
<feature type="chain" id="PRO_0000239490" description="Envelope glycoprotein gp160" evidence="1">
    <location>
        <begin position="33"/>
        <end position="853"/>
    </location>
</feature>
<feature type="chain" id="PRO_0000038421" description="Surface protein gp120" evidence="1">
    <location>
        <begin position="33"/>
        <end position="509"/>
    </location>
</feature>
<feature type="chain" id="PRO_0000038422" description="Transmembrane protein gp41" evidence="1">
    <location>
        <begin position="510"/>
        <end position="853"/>
    </location>
</feature>
<feature type="topological domain" description="Extracellular" evidence="1">
    <location>
        <begin position="33"/>
        <end position="682"/>
    </location>
</feature>
<feature type="transmembrane region" description="Helical" evidence="1">
    <location>
        <begin position="683"/>
        <end position="703"/>
    </location>
</feature>
<feature type="topological domain" description="Cytoplasmic" evidence="1">
    <location>
        <begin position="704"/>
        <end position="853"/>
    </location>
</feature>
<feature type="region of interest" description="V1" evidence="1">
    <location>
        <begin position="131"/>
        <end position="156"/>
    </location>
</feature>
<feature type="region of interest" description="V2" evidence="1">
    <location>
        <begin position="157"/>
        <end position="194"/>
    </location>
</feature>
<feature type="region of interest" description="V3" evidence="1">
    <location>
        <begin position="294"/>
        <end position="328"/>
    </location>
</feature>
<feature type="region of interest" description="CD4-binding loop" evidence="1">
    <location>
        <begin position="362"/>
        <end position="372"/>
    </location>
</feature>
<feature type="region of interest" description="V4" evidence="1">
    <location>
        <begin position="383"/>
        <end position="416"/>
    </location>
</feature>
<feature type="region of interest" description="V5">
    <location>
        <begin position="459"/>
        <end position="469"/>
    </location>
</feature>
<feature type="region of interest" description="V5" evidence="1">
    <location>
        <begin position="461"/>
        <end position="469"/>
    </location>
</feature>
<feature type="region of interest" description="Fusion peptide" evidence="1">
    <location>
        <begin position="510"/>
        <end position="530"/>
    </location>
</feature>
<feature type="region of interest" description="Immunosuppression" evidence="1">
    <location>
        <begin position="572"/>
        <end position="590"/>
    </location>
</feature>
<feature type="region of interest" description="MPER; binding to GalCer" evidence="1">
    <location>
        <begin position="660"/>
        <end position="681"/>
    </location>
</feature>
<feature type="region of interest" description="Disordered" evidence="2">
    <location>
        <begin position="717"/>
        <end position="741"/>
    </location>
</feature>
<feature type="coiled-coil region" evidence="1">
    <location>
        <begin position="631"/>
        <end position="665"/>
    </location>
</feature>
<feature type="short sequence motif" description="YXXL motif; contains endocytosis signal" evidence="1">
    <location>
        <begin position="710"/>
        <end position="713"/>
    </location>
</feature>
<feature type="site" description="Cleavage; by host furin" evidence="1">
    <location>
        <begin position="509"/>
        <end position="510"/>
    </location>
</feature>
<feature type="lipid moiety-binding region" description="S-palmitoyl cysteine; by host" evidence="1">
    <location>
        <position position="762"/>
    </location>
</feature>
<feature type="glycosylation site" description="N-linked (GlcNAc...) asparagine; by host" evidence="1">
    <location>
        <position position="88"/>
    </location>
</feature>
<feature type="glycosylation site" description="N-linked (GlcNAc...) asparagine; by host" evidence="1">
    <location>
        <position position="136"/>
    </location>
</feature>
<feature type="glycosylation site" description="N-linked (GlcNAc...) asparagine; by host" evidence="1">
    <location>
        <position position="141"/>
    </location>
</feature>
<feature type="glycosylation site" description="N-linked (GlcNAc...) asparagine; by host" evidence="1">
    <location>
        <position position="156"/>
    </location>
</feature>
<feature type="glycosylation site" description="N-linked (GlcNAc...) asparagine; by host" evidence="1">
    <location>
        <position position="160"/>
    </location>
</feature>
<feature type="glycosylation site" description="N-linked (GlcNAc...) asparagine; by host" evidence="1">
    <location>
        <position position="186"/>
    </location>
</feature>
<feature type="glycosylation site" description="N-linked (GlcNAc...) asparagine; by host" evidence="1">
    <location>
        <position position="195"/>
    </location>
</feature>
<feature type="glycosylation site" description="N-linked (GlcNAc...) asparagine; by host" evidence="1">
    <location>
        <position position="232"/>
    </location>
</feature>
<feature type="glycosylation site" description="N-linked (GlcNAc...) asparagine; by host" evidence="1">
    <location>
        <position position="239"/>
    </location>
</feature>
<feature type="glycosylation site" description="N-linked (GlcNAc...) asparagine; by host" evidence="1">
    <location>
        <position position="260"/>
    </location>
</feature>
<feature type="glycosylation site" description="N-linked (GlcNAc...) asparagine; by host" evidence="1">
    <location>
        <position position="274"/>
    </location>
</feature>
<feature type="glycosylation site" description="N-linked (GlcNAc...) asparagine; by host" evidence="1">
    <location>
        <position position="287"/>
    </location>
</feature>
<feature type="glycosylation site" description="N-linked (GlcNAc...) asparagine; by host" evidence="1">
    <location>
        <position position="293"/>
    </location>
</feature>
<feature type="glycosylation site" description="N-linked (GlcNAc...) asparagine; by host" evidence="1">
    <location>
        <position position="299"/>
    </location>
</feature>
<feature type="glycosylation site" description="N-linked (GlcNAc...) asparagine; by host" evidence="1">
    <location>
        <position position="330"/>
    </location>
</feature>
<feature type="glycosylation site" description="N-linked (GlcNAc...) asparagine; by host" evidence="1">
    <location>
        <position position="354"/>
    </location>
</feature>
<feature type="glycosylation site" description="N-linked (GlcNAc...) asparagine; by host" evidence="1">
    <location>
        <position position="384"/>
    </location>
</feature>
<feature type="glycosylation site" description="N-linked (GlcNAc...) asparagine; by host" evidence="1">
    <location>
        <position position="390"/>
    </location>
</feature>
<feature type="glycosylation site" description="N-linked (GlcNAc...) asparagine; by host" evidence="1">
    <location>
        <position position="395"/>
    </location>
</feature>
<feature type="glycosylation site" description="N-linked (GlcNAc...) asparagine; by host" evidence="1">
    <location>
        <position position="404"/>
    </location>
</feature>
<feature type="glycosylation site" description="N-linked (GlcNAc...) asparagine; by host" evidence="1">
    <location>
        <position position="446"/>
    </location>
</feature>
<feature type="glycosylation site" description="N-linked (GlcNAc...) asparagine; by host" evidence="1">
    <location>
        <position position="461"/>
    </location>
</feature>
<feature type="glycosylation site" description="N-linked (GlcNAc...) asparagine; by host" evidence="1">
    <location>
        <position position="609"/>
    </location>
</feature>
<feature type="glycosylation site" description="N-linked (GlcNAc...) asparagine; by host" evidence="1">
    <location>
        <position position="614"/>
    </location>
</feature>
<feature type="glycosylation site" description="N-linked (GlcNAc...) asparagine; by host" evidence="1">
    <location>
        <position position="623"/>
    </location>
</feature>
<feature type="glycosylation site" description="N-linked (GlcNAc...) asparagine; by host" evidence="1">
    <location>
        <position position="635"/>
    </location>
</feature>
<feature type="glycosylation site" description="N-linked (GlcNAc...) asparagine; by host" evidence="1">
    <location>
        <position position="672"/>
    </location>
</feature>
<feature type="disulfide bond" evidence="1">
    <location>
        <begin position="54"/>
        <end position="74"/>
    </location>
</feature>
<feature type="disulfide bond" evidence="1">
    <location>
        <begin position="119"/>
        <end position="203"/>
    </location>
</feature>
<feature type="disulfide bond" evidence="1">
    <location>
        <begin position="126"/>
        <end position="194"/>
    </location>
</feature>
<feature type="disulfide bond" evidence="1">
    <location>
        <begin position="131"/>
        <end position="157"/>
    </location>
</feature>
<feature type="disulfide bond" evidence="1">
    <location>
        <begin position="216"/>
        <end position="245"/>
    </location>
</feature>
<feature type="disulfide bond" evidence="1">
    <location>
        <begin position="226"/>
        <end position="237"/>
    </location>
</feature>
<feature type="disulfide bond" evidence="1">
    <location>
        <begin position="294"/>
        <end position="329"/>
    </location>
</feature>
<feature type="disulfide bond" evidence="1">
    <location>
        <begin position="376"/>
        <end position="443"/>
    </location>
</feature>
<feature type="disulfide bond" evidence="1">
    <location>
        <begin position="383"/>
        <end position="416"/>
    </location>
</feature>
<feature type="disulfide bond" evidence="1">
    <location>
        <begin position="596"/>
        <end position="602"/>
    </location>
</feature>
<feature type="strand" evidence="3">
    <location>
        <begin position="84"/>
        <end position="88"/>
    </location>
</feature>
<feature type="strand" evidence="4">
    <location>
        <begin position="91"/>
        <end position="94"/>
    </location>
</feature>
<feature type="helix" evidence="4">
    <location>
        <begin position="99"/>
        <end position="115"/>
    </location>
</feature>
<feature type="strand" evidence="4">
    <location>
        <begin position="119"/>
        <end position="125"/>
    </location>
</feature>
<feature type="strand" evidence="4">
    <location>
        <begin position="195"/>
        <end position="200"/>
    </location>
</feature>
<feature type="strand" evidence="4">
    <location>
        <begin position="221"/>
        <end position="226"/>
    </location>
</feature>
<feature type="strand" evidence="4">
    <location>
        <begin position="233"/>
        <end position="245"/>
    </location>
</feature>
<feature type="strand" evidence="4">
    <location>
        <begin position="254"/>
        <end position="260"/>
    </location>
</feature>
<feature type="strand" evidence="4">
    <location>
        <begin position="265"/>
        <end position="267"/>
    </location>
</feature>
<feature type="strand" evidence="4">
    <location>
        <begin position="269"/>
        <end position="271"/>
    </location>
</feature>
<feature type="strand" evidence="4">
    <location>
        <begin position="282"/>
        <end position="295"/>
    </location>
</feature>
<feature type="turn" evidence="4">
    <location>
        <begin position="310"/>
        <end position="312"/>
    </location>
</feature>
<feature type="strand" evidence="4">
    <location>
        <begin position="328"/>
        <end position="332"/>
    </location>
</feature>
<feature type="helix" evidence="4">
    <location>
        <begin position="333"/>
        <end position="351"/>
    </location>
</feature>
<feature type="strand" evidence="4">
    <location>
        <begin position="356"/>
        <end position="359"/>
    </location>
</feature>
<feature type="helix" evidence="4">
    <location>
        <begin position="367"/>
        <end position="370"/>
    </location>
</feature>
<feature type="strand" evidence="4">
    <location>
        <begin position="371"/>
        <end position="376"/>
    </location>
</feature>
<feature type="strand" evidence="4">
    <location>
        <begin position="379"/>
        <end position="383"/>
    </location>
</feature>
<feature type="helix" evidence="4">
    <location>
        <begin position="386"/>
        <end position="388"/>
    </location>
</feature>
<feature type="strand" evidence="4">
    <location>
        <begin position="391"/>
        <end position="393"/>
    </location>
</feature>
<feature type="strand" evidence="4">
    <location>
        <begin position="410"/>
        <end position="423"/>
    </location>
</feature>
<feature type="strand" evidence="4">
    <location>
        <begin position="425"/>
        <end position="428"/>
    </location>
</feature>
<feature type="strand" evidence="4">
    <location>
        <begin position="430"/>
        <end position="432"/>
    </location>
</feature>
<feature type="strand" evidence="4">
    <location>
        <begin position="442"/>
        <end position="454"/>
    </location>
</feature>
<feature type="strand" evidence="4">
    <location>
        <begin position="461"/>
        <end position="468"/>
    </location>
</feature>
<feature type="helix" evidence="4">
    <location>
        <begin position="473"/>
        <end position="481"/>
    </location>
</feature>
<feature type="strand" evidence="4">
    <location>
        <begin position="484"/>
        <end position="488"/>
    </location>
</feature>
<sequence>MRVKEKYQHLWRWGWKWGIMLLGILMICSATENLWVTVYYGVPVWKEATTTLFCASDAKAYDTEVHNVCATHACVPTDPNPQEVILVNVTENFDMWKNDMVEQMHEDIISLWDQSLKPCVKLTPLCVNLKCTDLKNDTNTNSSNGRMIMEKGEIKNCSFNISTSIRNKVQKEYAFFYKLDIRPIDNTTYRLISCNTSVITQACPKVSFEPIPIHYCAPAGFAILKCNDKTFNGTGPCTNVSTVQCTHGIRPVVSTQLLLNGSLAEEEGVIRSANFTDNAKTIIVQLNTSVEINCTRPNNNTRKSIRIQRGPGRAFVTIGKIGNMRQAHCNISRAKWMSTLKQIASKLREQFGNNKTVIFKQSSGGDPEIVTHSFNCGGEFFYCNSTQLFNSTWFNSTWSTEGSNNTEGSDTITLPCRIKQFINMWQEVGKAMYAPPISGQIRCSSNITGLLLTRDGGKNTNESEVFRPGGGDMRDNWRSELYKYKVVKIETLGVAPTKAKRRVVQREKRAVGIGALFLGFLGAAGSTMGAASMTLTVQARQLLSGIVQQQNNLLRAIEAQQHLLQLTVWGIKQLQARILAVERYLKDQQLLGIWGCSGKLICTTAVPWNASWSNKSLEQFWNNMTWMEWDREINNYTSLIHSLIDESQNQQEKNEQELLELDKWASLWNWFNITNWLWYIKIFIMIVGGLVGLRIVFAVLSIVNRVRQGYSPLSFQTHLPNRGGPDRPEGIEEEGGERDRDRSVRLVNGSLALIWDDLRSLCLFSYHRLRDLLLIVTRIVELLGRRGWEALKYWWNLLQYWSQELKNSAVSLLNATAIAVAEGTDRVIEVVQGAYRAIRHIPRRIRQGLERIL</sequence>
<accession>P19551</accession>